<comment type="function">
    <text evidence="1">Catalyzes the transfer of an acyl group from acyl-phosphate (acyl-PO(4)) to glycerol-3-phosphate (G3P) to form lysophosphatidic acid (LPA). This enzyme utilizes acyl-phosphate as fatty acyl donor, but not acyl-CoA or acyl-ACP.</text>
</comment>
<comment type="catalytic activity">
    <reaction evidence="1">
        <text>an acyl phosphate + sn-glycerol 3-phosphate = a 1-acyl-sn-glycero-3-phosphate + phosphate</text>
        <dbReference type="Rhea" id="RHEA:34075"/>
        <dbReference type="ChEBI" id="CHEBI:43474"/>
        <dbReference type="ChEBI" id="CHEBI:57597"/>
        <dbReference type="ChEBI" id="CHEBI:57970"/>
        <dbReference type="ChEBI" id="CHEBI:59918"/>
        <dbReference type="EC" id="2.3.1.275"/>
    </reaction>
</comment>
<comment type="pathway">
    <text evidence="1">Lipid metabolism; phospholipid metabolism.</text>
</comment>
<comment type="subunit">
    <text evidence="1">Probably interacts with PlsX.</text>
</comment>
<comment type="subcellular location">
    <subcellularLocation>
        <location evidence="1">Cell membrane</location>
        <topology evidence="1">Multi-pass membrane protein</topology>
    </subcellularLocation>
</comment>
<comment type="similarity">
    <text evidence="1">Belongs to the PlsY family.</text>
</comment>
<dbReference type="EC" id="2.3.1.275" evidence="1"/>
<dbReference type="EMBL" id="CP000423">
    <property type="protein sequence ID" value="ABJ70185.1"/>
    <property type="molecule type" value="Genomic_DNA"/>
</dbReference>
<dbReference type="RefSeq" id="WP_003565428.1">
    <property type="nucleotide sequence ID" value="NC_008526.1"/>
</dbReference>
<dbReference type="RefSeq" id="YP_806627.1">
    <property type="nucleotide sequence ID" value="NC_008526.1"/>
</dbReference>
<dbReference type="SMR" id="Q039D7"/>
<dbReference type="STRING" id="321967.LSEI_1407"/>
<dbReference type="PaxDb" id="321967-LSEI_1407"/>
<dbReference type="GeneID" id="57090074"/>
<dbReference type="KEGG" id="lca:LSEI_1407"/>
<dbReference type="PATRIC" id="fig|321967.11.peg.1385"/>
<dbReference type="HOGENOM" id="CLU_081254_4_0_9"/>
<dbReference type="UniPathway" id="UPA00085"/>
<dbReference type="Proteomes" id="UP000001651">
    <property type="component" value="Chromosome"/>
</dbReference>
<dbReference type="GO" id="GO:0005886">
    <property type="term" value="C:plasma membrane"/>
    <property type="evidence" value="ECO:0007669"/>
    <property type="project" value="UniProtKB-SubCell"/>
</dbReference>
<dbReference type="GO" id="GO:0043772">
    <property type="term" value="F:acyl-phosphate glycerol-3-phosphate acyltransferase activity"/>
    <property type="evidence" value="ECO:0007669"/>
    <property type="project" value="UniProtKB-UniRule"/>
</dbReference>
<dbReference type="GO" id="GO:0008654">
    <property type="term" value="P:phospholipid biosynthetic process"/>
    <property type="evidence" value="ECO:0007669"/>
    <property type="project" value="UniProtKB-UniRule"/>
</dbReference>
<dbReference type="HAMAP" id="MF_01043">
    <property type="entry name" value="PlsY"/>
    <property type="match status" value="1"/>
</dbReference>
<dbReference type="InterPro" id="IPR003811">
    <property type="entry name" value="G3P_acylTferase_PlsY"/>
</dbReference>
<dbReference type="NCBIfam" id="TIGR00023">
    <property type="entry name" value="glycerol-3-phosphate 1-O-acyltransferase PlsY"/>
    <property type="match status" value="1"/>
</dbReference>
<dbReference type="PANTHER" id="PTHR30309:SF0">
    <property type="entry name" value="GLYCEROL-3-PHOSPHATE ACYLTRANSFERASE-RELATED"/>
    <property type="match status" value="1"/>
</dbReference>
<dbReference type="PANTHER" id="PTHR30309">
    <property type="entry name" value="INNER MEMBRANE PROTEIN YGIH"/>
    <property type="match status" value="1"/>
</dbReference>
<dbReference type="Pfam" id="PF02660">
    <property type="entry name" value="G3P_acyltransf"/>
    <property type="match status" value="1"/>
</dbReference>
<dbReference type="SMART" id="SM01207">
    <property type="entry name" value="G3P_acyltransf"/>
    <property type="match status" value="1"/>
</dbReference>
<keyword id="KW-1003">Cell membrane</keyword>
<keyword id="KW-0444">Lipid biosynthesis</keyword>
<keyword id="KW-0443">Lipid metabolism</keyword>
<keyword id="KW-0472">Membrane</keyword>
<keyword id="KW-0594">Phospholipid biosynthesis</keyword>
<keyword id="KW-1208">Phospholipid metabolism</keyword>
<keyword id="KW-1185">Reference proteome</keyword>
<keyword id="KW-0808">Transferase</keyword>
<keyword id="KW-0812">Transmembrane</keyword>
<keyword id="KW-1133">Transmembrane helix</keyword>
<feature type="chain" id="PRO_1000064188" description="Glycerol-3-phosphate acyltransferase">
    <location>
        <begin position="1"/>
        <end position="207"/>
    </location>
</feature>
<feature type="transmembrane region" description="Helical" evidence="1">
    <location>
        <begin position="2"/>
        <end position="22"/>
    </location>
</feature>
<feature type="transmembrane region" description="Helical" evidence="1">
    <location>
        <begin position="47"/>
        <end position="67"/>
    </location>
</feature>
<feature type="transmembrane region" description="Helical" evidence="1">
    <location>
        <begin position="72"/>
        <end position="92"/>
    </location>
</feature>
<feature type="transmembrane region" description="Helical" evidence="1">
    <location>
        <begin position="121"/>
        <end position="141"/>
    </location>
</feature>
<feature type="transmembrane region" description="Helical" evidence="1">
    <location>
        <begin position="155"/>
        <end position="175"/>
    </location>
</feature>
<accession>Q039D7</accession>
<gene>
    <name evidence="1" type="primary">plsY</name>
    <name type="ordered locus">LSEI_1407</name>
</gene>
<protein>
    <recommendedName>
        <fullName evidence="1">Glycerol-3-phosphate acyltransferase</fullName>
    </recommendedName>
    <alternativeName>
        <fullName evidence="1">Acyl-PO4 G3P acyltransferase</fullName>
    </alternativeName>
    <alternativeName>
        <fullName evidence="1">Acyl-phosphate--glycerol-3-phosphate acyltransferase</fullName>
    </alternativeName>
    <alternativeName>
        <fullName evidence="1">G3P acyltransferase</fullName>
        <shortName evidence="1">GPAT</shortName>
        <ecNumber evidence="1">2.3.1.275</ecNumber>
    </alternativeName>
    <alternativeName>
        <fullName evidence="1">Lysophosphatidic acid synthase</fullName>
        <shortName evidence="1">LPA synthase</shortName>
    </alternativeName>
</protein>
<sequence>MILVLCFILAYFIGAIPFGVVIGKLFYHTDIRKGGSHNIGTTNAYRMLGPVGGSIVLVLDILKGTLAASLPILFGIEHHWLVLIVGLAAVFGHTFSIYIRFKGGKAVATSAGILLAYNPPFFVIAFAIWFSLILLTSMVSVASTLGMVLITAWSLVYHDWLLTTVACGLLVVFLIKHRANFKRIKAGDENMVPFGLGQYLRQHRGRS</sequence>
<name>PLSY_LACP3</name>
<proteinExistence type="inferred from homology"/>
<reference key="1">
    <citation type="journal article" date="2006" name="Proc. Natl. Acad. Sci. U.S.A.">
        <title>Comparative genomics of the lactic acid bacteria.</title>
        <authorList>
            <person name="Makarova K.S."/>
            <person name="Slesarev A."/>
            <person name="Wolf Y.I."/>
            <person name="Sorokin A."/>
            <person name="Mirkin B."/>
            <person name="Koonin E.V."/>
            <person name="Pavlov A."/>
            <person name="Pavlova N."/>
            <person name="Karamychev V."/>
            <person name="Polouchine N."/>
            <person name="Shakhova V."/>
            <person name="Grigoriev I."/>
            <person name="Lou Y."/>
            <person name="Rohksar D."/>
            <person name="Lucas S."/>
            <person name="Huang K."/>
            <person name="Goodstein D.M."/>
            <person name="Hawkins T."/>
            <person name="Plengvidhya V."/>
            <person name="Welker D."/>
            <person name="Hughes J."/>
            <person name="Goh Y."/>
            <person name="Benson A."/>
            <person name="Baldwin K."/>
            <person name="Lee J.-H."/>
            <person name="Diaz-Muniz I."/>
            <person name="Dosti B."/>
            <person name="Smeianov V."/>
            <person name="Wechter W."/>
            <person name="Barabote R."/>
            <person name="Lorca G."/>
            <person name="Altermann E."/>
            <person name="Barrangou R."/>
            <person name="Ganesan B."/>
            <person name="Xie Y."/>
            <person name="Rawsthorne H."/>
            <person name="Tamir D."/>
            <person name="Parker C."/>
            <person name="Breidt F."/>
            <person name="Broadbent J.R."/>
            <person name="Hutkins R."/>
            <person name="O'Sullivan D."/>
            <person name="Steele J."/>
            <person name="Unlu G."/>
            <person name="Saier M.H. Jr."/>
            <person name="Klaenhammer T."/>
            <person name="Richardson P."/>
            <person name="Kozyavkin S."/>
            <person name="Weimer B.C."/>
            <person name="Mills D.A."/>
        </authorList>
    </citation>
    <scope>NUCLEOTIDE SEQUENCE [LARGE SCALE GENOMIC DNA]</scope>
    <source>
        <strain>ATCC 334 / BCRC 17002 / CCUG 31169 / CIP 107868 / KCTC 3260 / NRRL B-441</strain>
    </source>
</reference>
<evidence type="ECO:0000255" key="1">
    <source>
        <dbReference type="HAMAP-Rule" id="MF_01043"/>
    </source>
</evidence>
<organism>
    <name type="scientific">Lacticaseibacillus paracasei (strain ATCC 334 / BCRC 17002 / CCUG 31169 / CIP 107868 / KCTC 3260 / NRRL B-441)</name>
    <name type="common">Lactobacillus paracasei</name>
    <dbReference type="NCBI Taxonomy" id="321967"/>
    <lineage>
        <taxon>Bacteria</taxon>
        <taxon>Bacillati</taxon>
        <taxon>Bacillota</taxon>
        <taxon>Bacilli</taxon>
        <taxon>Lactobacillales</taxon>
        <taxon>Lactobacillaceae</taxon>
        <taxon>Lacticaseibacillus</taxon>
    </lineage>
</organism>